<evidence type="ECO:0000255" key="1">
    <source>
        <dbReference type="HAMAP-Rule" id="MF_01368"/>
    </source>
</evidence>
<evidence type="ECO:0000305" key="2"/>
<gene>
    <name evidence="1" type="primary">rplQ</name>
    <name evidence="1" type="synonym">rpl17</name>
    <name type="ordered locus">PMM1534</name>
</gene>
<reference key="1">
    <citation type="journal article" date="2003" name="Nature">
        <title>Genome divergence in two Prochlorococcus ecotypes reflects oceanic niche differentiation.</title>
        <authorList>
            <person name="Rocap G."/>
            <person name="Larimer F.W."/>
            <person name="Lamerdin J.E."/>
            <person name="Malfatti S."/>
            <person name="Chain P."/>
            <person name="Ahlgren N.A."/>
            <person name="Arellano A."/>
            <person name="Coleman M."/>
            <person name="Hauser L."/>
            <person name="Hess W.R."/>
            <person name="Johnson Z.I."/>
            <person name="Land M.L."/>
            <person name="Lindell D."/>
            <person name="Post A.F."/>
            <person name="Regala W."/>
            <person name="Shah M."/>
            <person name="Shaw S.L."/>
            <person name="Steglich C."/>
            <person name="Sullivan M.B."/>
            <person name="Ting C.S."/>
            <person name="Tolonen A."/>
            <person name="Webb E.A."/>
            <person name="Zinser E.R."/>
            <person name="Chisholm S.W."/>
        </authorList>
    </citation>
    <scope>NUCLEOTIDE SEQUENCE [LARGE SCALE GENOMIC DNA]</scope>
    <source>
        <strain>CCMP1986 / NIES-2087 / MED4</strain>
    </source>
</reference>
<dbReference type="EMBL" id="BX548174">
    <property type="protein sequence ID" value="CAE19993.1"/>
    <property type="molecule type" value="Genomic_DNA"/>
</dbReference>
<dbReference type="RefSeq" id="WP_011133162.1">
    <property type="nucleotide sequence ID" value="NC_005072.1"/>
</dbReference>
<dbReference type="SMR" id="Q7UZW7"/>
<dbReference type="STRING" id="59919.PMM1534"/>
<dbReference type="KEGG" id="pmm:PMM1534"/>
<dbReference type="eggNOG" id="COG0203">
    <property type="taxonomic scope" value="Bacteria"/>
</dbReference>
<dbReference type="HOGENOM" id="CLU_074407_2_2_3"/>
<dbReference type="OrthoDB" id="9809073at2"/>
<dbReference type="Proteomes" id="UP000001026">
    <property type="component" value="Chromosome"/>
</dbReference>
<dbReference type="GO" id="GO:0022625">
    <property type="term" value="C:cytosolic large ribosomal subunit"/>
    <property type="evidence" value="ECO:0007669"/>
    <property type="project" value="TreeGrafter"/>
</dbReference>
<dbReference type="GO" id="GO:0003735">
    <property type="term" value="F:structural constituent of ribosome"/>
    <property type="evidence" value="ECO:0007669"/>
    <property type="project" value="InterPro"/>
</dbReference>
<dbReference type="GO" id="GO:0006412">
    <property type="term" value="P:translation"/>
    <property type="evidence" value="ECO:0007669"/>
    <property type="project" value="UniProtKB-UniRule"/>
</dbReference>
<dbReference type="FunFam" id="3.90.1030.10:FF:000001">
    <property type="entry name" value="50S ribosomal protein L17"/>
    <property type="match status" value="1"/>
</dbReference>
<dbReference type="Gene3D" id="3.90.1030.10">
    <property type="entry name" value="Ribosomal protein L17"/>
    <property type="match status" value="1"/>
</dbReference>
<dbReference type="HAMAP" id="MF_01368">
    <property type="entry name" value="Ribosomal_bL17"/>
    <property type="match status" value="1"/>
</dbReference>
<dbReference type="InterPro" id="IPR000456">
    <property type="entry name" value="Ribosomal_bL17"/>
</dbReference>
<dbReference type="InterPro" id="IPR036373">
    <property type="entry name" value="Ribosomal_bL17_sf"/>
</dbReference>
<dbReference type="NCBIfam" id="TIGR00059">
    <property type="entry name" value="L17"/>
    <property type="match status" value="1"/>
</dbReference>
<dbReference type="PANTHER" id="PTHR14413:SF16">
    <property type="entry name" value="LARGE RIBOSOMAL SUBUNIT PROTEIN BL17M"/>
    <property type="match status" value="1"/>
</dbReference>
<dbReference type="PANTHER" id="PTHR14413">
    <property type="entry name" value="RIBOSOMAL PROTEIN L17"/>
    <property type="match status" value="1"/>
</dbReference>
<dbReference type="Pfam" id="PF01196">
    <property type="entry name" value="Ribosomal_L17"/>
    <property type="match status" value="1"/>
</dbReference>
<dbReference type="SUPFAM" id="SSF64263">
    <property type="entry name" value="Prokaryotic ribosomal protein L17"/>
    <property type="match status" value="1"/>
</dbReference>
<sequence>MRHQLRVPLLSKPADQRKALLRALTTQLIREGRITTTKARAKALRNEAERMISLAKEGTLSARRRALGYIYDKKLVHSLFEKAQERYGERNGGYTRIVRTVARKGDNAQMAIIELV</sequence>
<feature type="chain" id="PRO_0000267913" description="Large ribosomal subunit protein bL17">
    <location>
        <begin position="1"/>
        <end position="116"/>
    </location>
</feature>
<comment type="subunit">
    <text evidence="1">Part of the 50S ribosomal subunit. Contacts protein L32.</text>
</comment>
<comment type="similarity">
    <text evidence="1">Belongs to the bacterial ribosomal protein bL17 family.</text>
</comment>
<keyword id="KW-0687">Ribonucleoprotein</keyword>
<keyword id="KW-0689">Ribosomal protein</keyword>
<accession>Q7UZW7</accession>
<organism>
    <name type="scientific">Prochlorococcus marinus subsp. pastoris (strain CCMP1986 / NIES-2087 / MED4)</name>
    <dbReference type="NCBI Taxonomy" id="59919"/>
    <lineage>
        <taxon>Bacteria</taxon>
        <taxon>Bacillati</taxon>
        <taxon>Cyanobacteriota</taxon>
        <taxon>Cyanophyceae</taxon>
        <taxon>Synechococcales</taxon>
        <taxon>Prochlorococcaceae</taxon>
        <taxon>Prochlorococcus</taxon>
    </lineage>
</organism>
<name>RL17_PROMP</name>
<proteinExistence type="inferred from homology"/>
<protein>
    <recommendedName>
        <fullName evidence="1">Large ribosomal subunit protein bL17</fullName>
    </recommendedName>
    <alternativeName>
        <fullName evidence="2">50S ribosomal protein L17</fullName>
    </alternativeName>
</protein>